<gene>
    <name type="primary">spa</name>
    <name type="ordered locus">NWMN_0055</name>
</gene>
<organism>
    <name type="scientific">Staphylococcus aureus (strain Newman)</name>
    <dbReference type="NCBI Taxonomy" id="426430"/>
    <lineage>
        <taxon>Bacteria</taxon>
        <taxon>Bacillati</taxon>
        <taxon>Bacillota</taxon>
        <taxon>Bacilli</taxon>
        <taxon>Bacillales</taxon>
        <taxon>Staphylococcaceae</taxon>
        <taxon>Staphylococcus</taxon>
    </lineage>
</organism>
<evidence type="ECO:0000250" key="1">
    <source>
        <dbReference type="UniProtKB" id="P02976"/>
    </source>
</evidence>
<evidence type="ECO:0000255" key="2"/>
<evidence type="ECO:0000255" key="3">
    <source>
        <dbReference type="PROSITE-ProRule" id="PRU00477"/>
    </source>
</evidence>
<evidence type="ECO:0000255" key="4">
    <source>
        <dbReference type="PROSITE-ProRule" id="PRU01118"/>
    </source>
</evidence>
<evidence type="ECO:0000256" key="5">
    <source>
        <dbReference type="SAM" id="MobiDB-lite"/>
    </source>
</evidence>
<evidence type="ECO:0000269" key="6">
    <source>
    </source>
</evidence>
<evidence type="ECO:0000269" key="7">
    <source>
    </source>
</evidence>
<evidence type="ECO:0000269" key="8">
    <source>
    </source>
</evidence>
<evidence type="ECO:0000269" key="9">
    <source>
    </source>
</evidence>
<evidence type="ECO:0000269" key="10">
    <source>
    </source>
</evidence>
<evidence type="ECO:0000269" key="11">
    <source>
    </source>
</evidence>
<evidence type="ECO:0000305" key="12"/>
<feature type="signal peptide" evidence="2 10">
    <location>
        <begin position="1"/>
        <end position="36"/>
    </location>
</feature>
<feature type="chain" id="PRO_5002613455" description="Immunoglobulin G-binding protein A">
    <location>
        <begin position="37"/>
        <end position="508"/>
    </location>
</feature>
<feature type="propeptide" id="PRO_0000445582" description="Removed by sortase" evidence="1 3">
    <location>
        <begin position="478"/>
        <end position="508"/>
    </location>
</feature>
<feature type="repeat" description="Immunoglobulin-binding region E" evidence="1">
    <location>
        <begin position="37"/>
        <end position="92"/>
    </location>
</feature>
<feature type="repeat" description="Immunoglobulin-binding region D" evidence="1">
    <location>
        <begin position="93"/>
        <end position="153"/>
    </location>
</feature>
<feature type="repeat" description="Immunoglobulin-binding region A" evidence="1">
    <location>
        <begin position="154"/>
        <end position="211"/>
    </location>
</feature>
<feature type="repeat" description="Immunoglobulin-binding region B" evidence="1">
    <location>
        <begin position="212"/>
        <end position="269"/>
    </location>
</feature>
<feature type="repeat" description="Immunoglobulin-binding region C" evidence="1">
    <location>
        <begin position="270"/>
        <end position="327"/>
    </location>
</feature>
<feature type="repeat" description="2-1" evidence="1">
    <location>
        <begin position="333"/>
        <end position="340"/>
    </location>
</feature>
<feature type="repeat" description="2-2" evidence="1">
    <location>
        <begin position="341"/>
        <end position="348"/>
    </location>
</feature>
<feature type="repeat" description="2-3" evidence="1">
    <location>
        <begin position="349"/>
        <end position="356"/>
    </location>
</feature>
<feature type="repeat" description="2-4" evidence="1">
    <location>
        <begin position="357"/>
        <end position="364"/>
    </location>
</feature>
<feature type="repeat" description="2-5" evidence="1">
    <location>
        <begin position="365"/>
        <end position="372"/>
    </location>
</feature>
<feature type="repeat" description="2-6" evidence="1">
    <location>
        <begin position="373"/>
        <end position="380"/>
    </location>
</feature>
<feature type="repeat" description="2-7" evidence="1">
    <location>
        <begin position="381"/>
        <end position="388"/>
    </location>
</feature>
<feature type="repeat" description="2-8" evidence="1">
    <location>
        <begin position="389"/>
        <end position="396"/>
    </location>
</feature>
<feature type="repeat" description="2-9" evidence="1">
    <location>
        <begin position="397"/>
        <end position="404"/>
    </location>
</feature>
<feature type="repeat" description="2-10" evidence="1">
    <location>
        <begin position="405"/>
        <end position="412"/>
    </location>
</feature>
<feature type="domain" description="LysM" evidence="4">
    <location>
        <begin position="413"/>
        <end position="457"/>
    </location>
</feature>
<feature type="region of interest" description="Disordered" evidence="5">
    <location>
        <begin position="318"/>
        <end position="421"/>
    </location>
</feature>
<feature type="region of interest" description="10 X 8 AA approximate tandem repeats" evidence="1">
    <location>
        <begin position="333"/>
        <end position="412"/>
    </location>
</feature>
<feature type="region of interest" description="Disordered" evidence="5">
    <location>
        <begin position="459"/>
        <end position="479"/>
    </location>
</feature>
<feature type="short sequence motif" description="YSIRK-G/S signaling motif" evidence="1">
    <location>
        <begin position="7"/>
        <end position="18"/>
    </location>
</feature>
<feature type="short sequence motif" description="LPXTG sorting signal" evidence="3">
    <location>
        <begin position="474"/>
        <end position="478"/>
    </location>
</feature>
<feature type="compositionally biased region" description="Basic and acidic residues" evidence="5">
    <location>
        <begin position="318"/>
        <end position="412"/>
    </location>
</feature>
<feature type="modified residue" description="Pentaglycyl murein peptidoglycan amidated threonine" evidence="3">
    <location>
        <position position="477"/>
    </location>
</feature>
<feature type="mutagenesis site" description="Complete loss of binding toepithelial cells." evidence="7">
    <original>F</original>
    <variation>A</variation>
    <location>
        <position position="47"/>
    </location>
</feature>
<feature type="mutagenesis site" description="Complete loss of binding toepithelial cells." evidence="7">
    <original>Y</original>
    <variation>A</variation>
    <location>
        <position position="48"/>
    </location>
</feature>
<reference key="1">
    <citation type="journal article" date="2008" name="J. Bacteriol.">
        <title>Genome sequence of Staphylococcus aureus strain Newman and comparative analysis of staphylococcal genomes: polymorphism and evolution of two major pathogenicity islands.</title>
        <authorList>
            <person name="Baba T."/>
            <person name="Bae T."/>
            <person name="Schneewind O."/>
            <person name="Takeuchi F."/>
            <person name="Hiramatsu K."/>
        </authorList>
    </citation>
    <scope>NUCLEOTIDE SEQUENCE [LARGE SCALE GENOMIC DNA]</scope>
    <source>
        <strain>Newman</strain>
    </source>
</reference>
<reference key="2">
    <citation type="journal article" date="2004" name="Nat. Med.">
        <title>Staphylococcus aureus protein A induces airway epithelial inflammatory responses by activating TNFR1.</title>
        <authorList>
            <person name="Gomez M.I."/>
            <person name="Lee A."/>
            <person name="Reddy B."/>
            <person name="Muir A."/>
            <person name="Soong G."/>
            <person name="Pitt A."/>
            <person name="Cheung A."/>
            <person name="Prince A."/>
        </authorList>
    </citation>
    <scope>FUNCTION</scope>
    <scope>INTERACTION WITH HOST TNFRSF1A</scope>
    <source>
        <strain>RN6390</strain>
    </source>
</reference>
<reference key="3">
    <citation type="journal article" date="2006" name="J. Biol. Chem.">
        <title>Staphylococcus aureus protein A activates TNFR1 signaling through conserved IgG binding domains.</title>
        <authorList>
            <person name="Gomez M.I."/>
            <person name="O'Seaghdha M."/>
            <person name="Magargee M."/>
            <person name="Foster T.J."/>
            <person name="Prince A.S."/>
        </authorList>
    </citation>
    <scope>FUNCTION</scope>
    <scope>MUTAGENESIS OF PHE-47 AND TYR-48</scope>
    <scope>INTERACTION WITH HOST TNFRSF1A</scope>
    <source>
        <strain>Newman</strain>
    </source>
</reference>
<reference key="4">
    <citation type="journal article" date="2012" name="PLoS ONE">
        <title>Staphylococcus aureus protein A plays a critical role in mediating bone destruction and bone loss in osteomyelitis.</title>
        <authorList>
            <person name="Widaa A."/>
            <person name="Claro T."/>
            <person name="Foster T.J."/>
            <person name="O'Brien F.J."/>
            <person name="Kerrigan S.W."/>
        </authorList>
    </citation>
    <scope>FUNCTION</scope>
    <scope>DISRUPTION PHENOTYPE</scope>
    <source>
        <strain>Newman</strain>
    </source>
</reference>
<reference key="5">
    <citation type="journal article" date="2014" name="Proc. Natl. Acad. Sci. U.S.A.">
        <title>Release of protein A from the cell wall of Staphylococcus aureus.</title>
        <authorList>
            <person name="Becker S."/>
            <person name="Frankel M.B."/>
            <person name="Schneewind O."/>
            <person name="Missiakas D."/>
        </authorList>
    </citation>
    <scope>PROTEIN SEQUENCE OF 37-38 AND 449-453</scope>
    <scope>SUBCELLULAR LOCATION</scope>
    <source>
        <strain>Newman</strain>
    </source>
</reference>
<reference key="6">
    <citation type="journal article" date="2007" name="J. Bacteriol.">
        <title>Distribution of protein A on the surface of Staphylococcus aureus.</title>
        <authorList>
            <person name="DeDent A.C."/>
            <person name="McAdow M."/>
            <person name="Schneewind O."/>
        </authorList>
    </citation>
    <scope>SUBCELLULAR LOCATION</scope>
    <source>
        <strain>Newman</strain>
    </source>
</reference>
<reference key="7">
    <citation type="journal article" date="2017" name="J. Immunol.">
        <title>Staphylococcus aureus Protein A Disrupts Immunity Mediated by Long-Lived Plasma Cells.</title>
        <authorList>
            <person name="Keener A.B."/>
            <person name="Thurlow L.T."/>
            <person name="Kang S."/>
            <person name="Spidale N.A."/>
            <person name="Clarke S.H."/>
            <person name="Cunnion K.M."/>
            <person name="Tisch R."/>
            <person name="Richardson A.R."/>
            <person name="Vilen B.J."/>
        </authorList>
    </citation>
    <scope>FUNCTION</scope>
    <scope>DISRUPTION PHENOTYPE</scope>
    <source>
        <strain>Newman</strain>
        <strain>RN4220</strain>
    </source>
</reference>
<accession>A0A0H3K686</accession>
<proteinExistence type="evidence at protein level"/>
<name>SPA_STAAE</name>
<sequence>MKKKNIYSIRKLGVGIASVTLGTLLISGGVTPAANAAQHDEAQQNAFYQVLNMPNLNADQRNGFIQSLKDDPSQSANVLGEAQKLNDSQAPKADAQQNNFNKDQQSAFYEILNMPNLNEAQRNGFIQSLKDDPSQSTNVLGEAKKLNESQAPKADNNFNKEQQNAFYEILNMPNLNEEQRNGFIQSLKDDPSQSANLLSEAKKLNESQAPKADNKFNKEQQNAFYEILHLPNLNEEQRNGFIQSLKDDPSQSANLLAEAKKLNDAQAPKADNKFNKEQQNAFYEILHLPNLTEEQRNGFIQSLKDDPSVSKEILAEAKKLNDAQAPKEEDNNKPGKEDNNKPGKEDNNKPGKEDNNKPGKEDGNKPGKEDNKKPGKEDGNKPGKEDNKKPGKEDGNKPGKEDGNKPGKEDGNGVHVVKPGDTVNDIAKANGTTADKIAADNKLADKNMIKPGQELVVDKKQPANHADANKAQALPETGEENPFIGTTVFGGLSLALGAALLAGRRREL</sequence>
<comment type="function">
    <text evidence="1 6 7 9 11">Plays a role in the inhibition of the host innate and adaptive immune responses. Possesses five immunoglobulin-binding domains that capture both the fragment crystallizable region (Fc region) and the Fab region (part of Ig that identifies antigen) of immunoglobulins (By similarity). In turn, Staphylococcus aureus is protected from phagocytic killing via inhibition of Ig Fc region. In addition, the host elicited B-cell response is prevented due to a decrease of antibody-secreting cell proliferation that enter the bone marrow, thereby decreasing long-term antibody production (PubMed:28031339). Inhibits osteogenesis by preventing osteoblast proliferation and expression of alkaline phosphatase, type I collagen, osteopontin and osteocalcin (PubMed:22792377). Acts directly as a pro-inflammatory factor in the lung through its ability to bind and activate tumor necrosis factor alpha receptor 1/TNFRSF1A (PubMed:15247912, PubMed:16709567).</text>
</comment>
<comment type="subunit">
    <text evidence="6 7">Interacts with host TNFRSF1A; this interaction leads to the stimulation of both surface expression and shedding of TNFRSF1A.</text>
</comment>
<comment type="subcellular location">
    <subcellularLocation>
        <location evidence="3 8 10">Secreted</location>
        <location evidence="3 8 10">Cell wall</location>
        <topology evidence="3 8 10">Peptidoglycan-anchor</topology>
    </subcellularLocation>
    <subcellularLocation>
        <location evidence="10">Secreted</location>
    </subcellularLocation>
    <text evidence="1 10">Released from the cell wall in a glycan-free form by LytM; released early in log growth, almost no release occurs after 3 hours growth (PubMed:24434550). Anchored to the cell wall by sortase A (By similarity).</text>
</comment>
<comment type="domain">
    <text evidence="1">Each of the immunoglobulin-binding region repeats can bind the Fc region of an immunoglobulin.</text>
</comment>
<comment type="disruption phenotype">
    <text evidence="9 11">Host antibody-secreting cells proliferate in the bone marrow survival niches and sustain long-term antibody titers (PubMed:28031339). In addition, osteogenesis is not inhibited and normal expression of alkaline phosphatase, type I collagen, osteopontin and osteocalcin is observed (PubMed:22792377).</text>
</comment>
<comment type="biotechnology">
    <text evidence="12">Important immunodiagnostic reagent because of its ability to bind the Fab and Fc fragments of a wide range of mammalian immunoglobulins.</text>
</comment>
<comment type="similarity">
    <text evidence="12">Belongs to the immunoglobulin-binding protein SpA family.</text>
</comment>
<comment type="sequence caution" evidence="12">
    <conflict type="erroneous initiation">
        <sequence resource="EMBL-CDS" id="BAF66327"/>
    </conflict>
    <text>Extended N-terminus.</text>
</comment>
<protein>
    <recommendedName>
        <fullName>Immunoglobulin G-binding protein A</fullName>
        <shortName>IgG-binding protein A</shortName>
    </recommendedName>
    <alternativeName>
        <fullName>Staphylococcal protein A</fullName>
        <shortName>SpA</shortName>
    </alternativeName>
</protein>
<keyword id="KW-0134">Cell wall</keyword>
<keyword id="KW-0903">Direct protein sequencing</keyword>
<keyword id="KW-0572">Peptidoglycan-anchor</keyword>
<keyword id="KW-0677">Repeat</keyword>
<keyword id="KW-0964">Secreted</keyword>
<keyword id="KW-0732">Signal</keyword>
<keyword id="KW-0843">Virulence</keyword>
<dbReference type="EMBL" id="AP009351">
    <property type="protein sequence ID" value="BAF66327.1"/>
    <property type="status" value="ALT_INIT"/>
    <property type="molecule type" value="Genomic_DNA"/>
</dbReference>
<dbReference type="RefSeq" id="WP_000728763.1">
    <property type="nucleotide sequence ID" value="NZ_JBBIAE010000007.1"/>
</dbReference>
<dbReference type="SMR" id="A0A0H3K686"/>
<dbReference type="KEGG" id="sae:NWMN_0055"/>
<dbReference type="HOGENOM" id="CLU_024983_0_0_9"/>
<dbReference type="Proteomes" id="UP000006386">
    <property type="component" value="Chromosome"/>
</dbReference>
<dbReference type="GO" id="GO:0005576">
    <property type="term" value="C:extracellular region"/>
    <property type="evidence" value="ECO:0007669"/>
    <property type="project" value="UniProtKB-SubCell"/>
</dbReference>
<dbReference type="GO" id="GO:0019865">
    <property type="term" value="F:immunoglobulin binding"/>
    <property type="evidence" value="ECO:0007669"/>
    <property type="project" value="InterPro"/>
</dbReference>
<dbReference type="CDD" id="cd00118">
    <property type="entry name" value="LysM"/>
    <property type="match status" value="1"/>
</dbReference>
<dbReference type="FunFam" id="1.20.5.420:FF:000003">
    <property type="entry name" value="Immunoglobulin G-binding protein A"/>
    <property type="match status" value="3"/>
</dbReference>
<dbReference type="Gene3D" id="1.20.5.420">
    <property type="entry name" value="Immunoglobulin FC, subunit C"/>
    <property type="match status" value="5"/>
</dbReference>
<dbReference type="Gene3D" id="3.10.350.10">
    <property type="entry name" value="LysM domain"/>
    <property type="match status" value="1"/>
</dbReference>
<dbReference type="InterPro" id="IPR009063">
    <property type="entry name" value="Ig/albumin-bd_sf"/>
</dbReference>
<dbReference type="InterPro" id="IPR019931">
    <property type="entry name" value="LPXTG_anchor"/>
</dbReference>
<dbReference type="InterPro" id="IPR018392">
    <property type="entry name" value="LysM_dom"/>
</dbReference>
<dbReference type="InterPro" id="IPR036779">
    <property type="entry name" value="LysM_dom_sf"/>
</dbReference>
<dbReference type="InterPro" id="IPR005038">
    <property type="entry name" value="Octapeptide"/>
</dbReference>
<dbReference type="InterPro" id="IPR003132">
    <property type="entry name" value="Protein_A_Ig-bd"/>
</dbReference>
<dbReference type="InterPro" id="IPR005877">
    <property type="entry name" value="YSIRK_signal_dom"/>
</dbReference>
<dbReference type="NCBIfam" id="TIGR01167">
    <property type="entry name" value="LPXTG_anchor"/>
    <property type="match status" value="1"/>
</dbReference>
<dbReference type="NCBIfam" id="TIGR01168">
    <property type="entry name" value="YSIRK_signal"/>
    <property type="match status" value="1"/>
</dbReference>
<dbReference type="Pfam" id="PF02216">
    <property type="entry name" value="B"/>
    <property type="match status" value="5"/>
</dbReference>
<dbReference type="Pfam" id="PF00746">
    <property type="entry name" value="Gram_pos_anchor"/>
    <property type="match status" value="1"/>
</dbReference>
<dbReference type="Pfam" id="PF01476">
    <property type="entry name" value="LysM"/>
    <property type="match status" value="1"/>
</dbReference>
<dbReference type="Pfam" id="PF03373">
    <property type="entry name" value="Octapeptide"/>
    <property type="match status" value="11"/>
</dbReference>
<dbReference type="Pfam" id="PF04650">
    <property type="entry name" value="YSIRK_signal"/>
    <property type="match status" value="1"/>
</dbReference>
<dbReference type="SMART" id="SM00257">
    <property type="entry name" value="LysM"/>
    <property type="match status" value="1"/>
</dbReference>
<dbReference type="SUPFAM" id="SSF46997">
    <property type="entry name" value="Bacterial immunoglobulin/albumin-binding domains"/>
    <property type="match status" value="5"/>
</dbReference>
<dbReference type="SUPFAM" id="SSF54106">
    <property type="entry name" value="LysM domain"/>
    <property type="match status" value="1"/>
</dbReference>
<dbReference type="PROSITE" id="PS50847">
    <property type="entry name" value="GRAM_POS_ANCHORING"/>
    <property type="match status" value="1"/>
</dbReference>
<dbReference type="PROSITE" id="PS51782">
    <property type="entry name" value="LYSM"/>
    <property type="match status" value="1"/>
</dbReference>